<feature type="chain" id="PRO_1000063940" description="Methylenetetrahydrofolate--tRNA-(uracil-5-)-methyltransferase TrmFO">
    <location>
        <begin position="1"/>
        <end position="447"/>
    </location>
</feature>
<feature type="binding site" evidence="1">
    <location>
        <begin position="13"/>
        <end position="18"/>
    </location>
    <ligand>
        <name>FAD</name>
        <dbReference type="ChEBI" id="CHEBI:57692"/>
    </ligand>
</feature>
<keyword id="KW-0963">Cytoplasm</keyword>
<keyword id="KW-0274">FAD</keyword>
<keyword id="KW-0285">Flavoprotein</keyword>
<keyword id="KW-0489">Methyltransferase</keyword>
<keyword id="KW-0520">NAD</keyword>
<keyword id="KW-0521">NADP</keyword>
<keyword id="KW-0808">Transferase</keyword>
<keyword id="KW-0819">tRNA processing</keyword>
<organism>
    <name type="scientific">Streptococcus thermophilus (strain ATCC BAA-491 / LMD-9)</name>
    <dbReference type="NCBI Taxonomy" id="322159"/>
    <lineage>
        <taxon>Bacteria</taxon>
        <taxon>Bacillati</taxon>
        <taxon>Bacillota</taxon>
        <taxon>Bacilli</taxon>
        <taxon>Lactobacillales</taxon>
        <taxon>Streptococcaceae</taxon>
        <taxon>Streptococcus</taxon>
    </lineage>
</organism>
<protein>
    <recommendedName>
        <fullName evidence="1">Methylenetetrahydrofolate--tRNA-(uracil-5-)-methyltransferase TrmFO</fullName>
        <ecNumber evidence="1">2.1.1.74</ecNumber>
    </recommendedName>
    <alternativeName>
        <fullName evidence="1">Folate-dependent tRNA (uracil-5-)-methyltransferase</fullName>
    </alternativeName>
    <alternativeName>
        <fullName evidence="1">Folate-dependent tRNA(M-5-U54)-methyltransferase</fullName>
    </alternativeName>
</protein>
<evidence type="ECO:0000255" key="1">
    <source>
        <dbReference type="HAMAP-Rule" id="MF_01037"/>
    </source>
</evidence>
<accession>Q03KX0</accession>
<gene>
    <name evidence="1" type="primary">trmFO</name>
    <name type="synonym">gid</name>
    <name type="ordered locus">STER_0927</name>
</gene>
<comment type="function">
    <text evidence="1">Catalyzes the folate-dependent formation of 5-methyl-uridine at position 54 (M-5-U54) in all tRNAs.</text>
</comment>
<comment type="catalytic activity">
    <reaction evidence="1">
        <text>uridine(54) in tRNA + (6R)-5,10-methylene-5,6,7,8-tetrahydrofolate + NADH + H(+) = 5-methyluridine(54) in tRNA + (6S)-5,6,7,8-tetrahydrofolate + NAD(+)</text>
        <dbReference type="Rhea" id="RHEA:16873"/>
        <dbReference type="Rhea" id="RHEA-COMP:10167"/>
        <dbReference type="Rhea" id="RHEA-COMP:10193"/>
        <dbReference type="ChEBI" id="CHEBI:15378"/>
        <dbReference type="ChEBI" id="CHEBI:15636"/>
        <dbReference type="ChEBI" id="CHEBI:57453"/>
        <dbReference type="ChEBI" id="CHEBI:57540"/>
        <dbReference type="ChEBI" id="CHEBI:57945"/>
        <dbReference type="ChEBI" id="CHEBI:65315"/>
        <dbReference type="ChEBI" id="CHEBI:74447"/>
        <dbReference type="EC" id="2.1.1.74"/>
    </reaction>
</comment>
<comment type="catalytic activity">
    <reaction evidence="1">
        <text>uridine(54) in tRNA + (6R)-5,10-methylene-5,6,7,8-tetrahydrofolate + NADPH + H(+) = 5-methyluridine(54) in tRNA + (6S)-5,6,7,8-tetrahydrofolate + NADP(+)</text>
        <dbReference type="Rhea" id="RHEA:62372"/>
        <dbReference type="Rhea" id="RHEA-COMP:10167"/>
        <dbReference type="Rhea" id="RHEA-COMP:10193"/>
        <dbReference type="ChEBI" id="CHEBI:15378"/>
        <dbReference type="ChEBI" id="CHEBI:15636"/>
        <dbReference type="ChEBI" id="CHEBI:57453"/>
        <dbReference type="ChEBI" id="CHEBI:57783"/>
        <dbReference type="ChEBI" id="CHEBI:58349"/>
        <dbReference type="ChEBI" id="CHEBI:65315"/>
        <dbReference type="ChEBI" id="CHEBI:74447"/>
        <dbReference type="EC" id="2.1.1.74"/>
    </reaction>
</comment>
<comment type="cofactor">
    <cofactor evidence="1">
        <name>FAD</name>
        <dbReference type="ChEBI" id="CHEBI:57692"/>
    </cofactor>
</comment>
<comment type="subcellular location">
    <subcellularLocation>
        <location evidence="1">Cytoplasm</location>
    </subcellularLocation>
</comment>
<comment type="similarity">
    <text evidence="1">Belongs to the MnmG family. TrmFO subfamily.</text>
</comment>
<dbReference type="EC" id="2.1.1.74" evidence="1"/>
<dbReference type="EMBL" id="CP000419">
    <property type="protein sequence ID" value="ABJ66152.1"/>
    <property type="molecule type" value="Genomic_DNA"/>
</dbReference>
<dbReference type="RefSeq" id="WP_002947913.1">
    <property type="nucleotide sequence ID" value="NC_008532.1"/>
</dbReference>
<dbReference type="SMR" id="Q03KX0"/>
<dbReference type="KEGG" id="ste:STER_0927"/>
<dbReference type="HOGENOM" id="CLU_033057_1_0_9"/>
<dbReference type="GO" id="GO:0005829">
    <property type="term" value="C:cytosol"/>
    <property type="evidence" value="ECO:0007669"/>
    <property type="project" value="TreeGrafter"/>
</dbReference>
<dbReference type="GO" id="GO:0050660">
    <property type="term" value="F:flavin adenine dinucleotide binding"/>
    <property type="evidence" value="ECO:0007669"/>
    <property type="project" value="UniProtKB-UniRule"/>
</dbReference>
<dbReference type="GO" id="GO:0047151">
    <property type="term" value="F:tRNA (uracil(54)-C5)-methyltransferase activity, 5,10-methylenetetrahydrofolate-dependent"/>
    <property type="evidence" value="ECO:0007669"/>
    <property type="project" value="UniProtKB-UniRule"/>
</dbReference>
<dbReference type="GO" id="GO:0030488">
    <property type="term" value="P:tRNA methylation"/>
    <property type="evidence" value="ECO:0007669"/>
    <property type="project" value="TreeGrafter"/>
</dbReference>
<dbReference type="GO" id="GO:0002098">
    <property type="term" value="P:tRNA wobble uridine modification"/>
    <property type="evidence" value="ECO:0007669"/>
    <property type="project" value="TreeGrafter"/>
</dbReference>
<dbReference type="FunFam" id="3.50.50.60:FF:000035">
    <property type="entry name" value="Methylenetetrahydrofolate--tRNA-(uracil-5-)-methyltransferase TrmFO"/>
    <property type="match status" value="1"/>
</dbReference>
<dbReference type="FunFam" id="3.50.50.60:FF:000040">
    <property type="entry name" value="Methylenetetrahydrofolate--tRNA-(uracil-5-)-methyltransferase TrmFO"/>
    <property type="match status" value="1"/>
</dbReference>
<dbReference type="Gene3D" id="3.50.50.60">
    <property type="entry name" value="FAD/NAD(P)-binding domain"/>
    <property type="match status" value="2"/>
</dbReference>
<dbReference type="HAMAP" id="MF_01037">
    <property type="entry name" value="TrmFO"/>
    <property type="match status" value="1"/>
</dbReference>
<dbReference type="InterPro" id="IPR036188">
    <property type="entry name" value="FAD/NAD-bd_sf"/>
</dbReference>
<dbReference type="InterPro" id="IPR002218">
    <property type="entry name" value="MnmG-rel"/>
</dbReference>
<dbReference type="InterPro" id="IPR020595">
    <property type="entry name" value="MnmG-rel_CS"/>
</dbReference>
<dbReference type="InterPro" id="IPR040131">
    <property type="entry name" value="MnmG_N"/>
</dbReference>
<dbReference type="InterPro" id="IPR004417">
    <property type="entry name" value="TrmFO"/>
</dbReference>
<dbReference type="NCBIfam" id="TIGR00137">
    <property type="entry name" value="gid_trmFO"/>
    <property type="match status" value="1"/>
</dbReference>
<dbReference type="NCBIfam" id="NF003739">
    <property type="entry name" value="PRK05335.1"/>
    <property type="match status" value="1"/>
</dbReference>
<dbReference type="PANTHER" id="PTHR11806">
    <property type="entry name" value="GLUCOSE INHIBITED DIVISION PROTEIN A"/>
    <property type="match status" value="1"/>
</dbReference>
<dbReference type="PANTHER" id="PTHR11806:SF2">
    <property type="entry name" value="METHYLENETETRAHYDROFOLATE--TRNA-(URACIL-5-)-METHYLTRANSFERASE TRMFO"/>
    <property type="match status" value="1"/>
</dbReference>
<dbReference type="Pfam" id="PF01134">
    <property type="entry name" value="GIDA"/>
    <property type="match status" value="1"/>
</dbReference>
<dbReference type="SUPFAM" id="SSF51905">
    <property type="entry name" value="FAD/NAD(P)-binding domain"/>
    <property type="match status" value="1"/>
</dbReference>
<dbReference type="PROSITE" id="PS01281">
    <property type="entry name" value="GIDA_2"/>
    <property type="match status" value="1"/>
</dbReference>
<sequence>MSQSKADYINVIGAGLAGSEAAYQIAKRGIPVKLYEMRGVKATPQHKTTNFAELVCSNSFRGDSLTNAVGLLKEEMRRLDSIIMRNGEAHRVPAGGAMAVDREGYAEAVTAEIESHPLIEVIRKEITEIPDDAITVIASGPLTSDALAEKIHELNGGDGFYFYDAAAPIVDKATIDMNKVYLKSRYDKGEAAYLNCPMTKEEFMAFYEALTTAEEAPLNSFEKEKYFEGCMPIEVMAKRGIKTMLYGPMKPVGLEYPEDYMGPRDGDFKTPYAVVQLRQDNAAGSLYNIVGFQTHLKWGEQKRVFQMIPGLENAEFVRYGVMHRNSYMDSPNLLKQTFQSKSNPNLFFAGQMTGVEGYVESAASGLVAGINAARLFKGEDEVIFPHTTAIGSLPYYVTHAESKHFQPMNVNFGIIKELEGPRIRDKKERYEKIAERALKDLQTFIDA</sequence>
<name>TRMFO_STRTD</name>
<proteinExistence type="inferred from homology"/>
<reference key="1">
    <citation type="journal article" date="2006" name="Proc. Natl. Acad. Sci. U.S.A.">
        <title>Comparative genomics of the lactic acid bacteria.</title>
        <authorList>
            <person name="Makarova K.S."/>
            <person name="Slesarev A."/>
            <person name="Wolf Y.I."/>
            <person name="Sorokin A."/>
            <person name="Mirkin B."/>
            <person name="Koonin E.V."/>
            <person name="Pavlov A."/>
            <person name="Pavlova N."/>
            <person name="Karamychev V."/>
            <person name="Polouchine N."/>
            <person name="Shakhova V."/>
            <person name="Grigoriev I."/>
            <person name="Lou Y."/>
            <person name="Rohksar D."/>
            <person name="Lucas S."/>
            <person name="Huang K."/>
            <person name="Goodstein D.M."/>
            <person name="Hawkins T."/>
            <person name="Plengvidhya V."/>
            <person name="Welker D."/>
            <person name="Hughes J."/>
            <person name="Goh Y."/>
            <person name="Benson A."/>
            <person name="Baldwin K."/>
            <person name="Lee J.-H."/>
            <person name="Diaz-Muniz I."/>
            <person name="Dosti B."/>
            <person name="Smeianov V."/>
            <person name="Wechter W."/>
            <person name="Barabote R."/>
            <person name="Lorca G."/>
            <person name="Altermann E."/>
            <person name="Barrangou R."/>
            <person name="Ganesan B."/>
            <person name="Xie Y."/>
            <person name="Rawsthorne H."/>
            <person name="Tamir D."/>
            <person name="Parker C."/>
            <person name="Breidt F."/>
            <person name="Broadbent J.R."/>
            <person name="Hutkins R."/>
            <person name="O'Sullivan D."/>
            <person name="Steele J."/>
            <person name="Unlu G."/>
            <person name="Saier M.H. Jr."/>
            <person name="Klaenhammer T."/>
            <person name="Richardson P."/>
            <person name="Kozyavkin S."/>
            <person name="Weimer B.C."/>
            <person name="Mills D.A."/>
        </authorList>
    </citation>
    <scope>NUCLEOTIDE SEQUENCE [LARGE SCALE GENOMIC DNA]</scope>
    <source>
        <strain>ATCC BAA-491 / LMD-9</strain>
    </source>
</reference>